<sequence>MRWLWPLAVSLAVVLAVGPSEVSGAATLSLGGHRAKVQEQQSRPRRGTKDEGPKEVQHYVPEEWAEYPKPIHPAGLQPTKPLVATSPNPDKDGATSESGQELRTNLTGTPSQRLQIQNPLYPVTESSYSAYAVMLLALVVFAVGIVGNLSVMCIVWHSYYLKSAWNSILASLALWDFLVLFFCLPIVIFNEITKQRLLGDVSCRAVPFMEVSSLGVTTFSLCALGIDRFHVATSTLPKVRPIERCQSILAKLAVIWVGSMMLAVPELLLWQLAQEPTPTMGTVDSCIMKPSADLPESLYSLVMTYQNARMWWYFGCYFCLPILFTVTCQLVTWRVRGPPGRKPECRAGRHEQCESQLNSTVVGLTVVYAFCTLPENICNIVVAYLSTELTRQTLDLLGLINQFSTFFKGAITPVLLLCICRPLGQAFLDCCCCCCCEECGGASDSSATVSADSKLKAEVSSSIYFHKPRESPPLLPLGTPC</sequence>
<name>G37L1_RAT</name>
<keyword id="KW-1003">Cell membrane</keyword>
<keyword id="KW-0966">Cell projection</keyword>
<keyword id="KW-1015">Disulfide bond</keyword>
<keyword id="KW-0297">G-protein coupled receptor</keyword>
<keyword id="KW-0325">Glycoprotein</keyword>
<keyword id="KW-0472">Membrane</keyword>
<keyword id="KW-0597">Phosphoprotein</keyword>
<keyword id="KW-0675">Receptor</keyword>
<keyword id="KW-1185">Reference proteome</keyword>
<keyword id="KW-0732">Signal</keyword>
<keyword id="KW-0807">Transducer</keyword>
<keyword id="KW-0812">Transmembrane</keyword>
<keyword id="KW-1133">Transmembrane helix</keyword>
<keyword id="KW-0832">Ubl conjugation</keyword>
<dbReference type="EMBL" id="AF087947">
    <property type="protein sequence ID" value="AAD54656.1"/>
    <property type="molecule type" value="mRNA"/>
</dbReference>
<dbReference type="SMR" id="Q9QYC5"/>
<dbReference type="FunCoup" id="Q9QYC5">
    <property type="interactions" value="607"/>
</dbReference>
<dbReference type="IntAct" id="Q9QYC5">
    <property type="interactions" value="1"/>
</dbReference>
<dbReference type="MINT" id="Q9QYC5"/>
<dbReference type="STRING" id="10116.ENSRNOP00000008282"/>
<dbReference type="GlyCosmos" id="Q9QYC5">
    <property type="glycosylation" value="1 site, No reported glycans"/>
</dbReference>
<dbReference type="GlyGen" id="Q9QYC5">
    <property type="glycosylation" value="2 sites"/>
</dbReference>
<dbReference type="iPTMnet" id="Q9QYC5"/>
<dbReference type="PhosphoSitePlus" id="Q9QYC5"/>
<dbReference type="PaxDb" id="10116-ENSRNOP00000008282"/>
<dbReference type="UCSC" id="RGD:628835">
    <property type="organism name" value="rat"/>
</dbReference>
<dbReference type="AGR" id="RGD:628835"/>
<dbReference type="RGD" id="628835">
    <property type="gene designation" value="Gpr37l1"/>
</dbReference>
<dbReference type="eggNOG" id="KOG3656">
    <property type="taxonomic scope" value="Eukaryota"/>
</dbReference>
<dbReference type="InParanoid" id="Q9QYC5"/>
<dbReference type="OrthoDB" id="8960080at2759"/>
<dbReference type="PhylomeDB" id="Q9QYC5"/>
<dbReference type="Reactome" id="R-RNO-375276">
    <property type="pathway name" value="Peptide ligand-binding receptors"/>
</dbReference>
<dbReference type="Reactome" id="R-RNO-418594">
    <property type="pathway name" value="G alpha (i) signalling events"/>
</dbReference>
<dbReference type="PRO" id="PR:Q9QYC5"/>
<dbReference type="Proteomes" id="UP000002494">
    <property type="component" value="Unplaced"/>
</dbReference>
<dbReference type="GO" id="GO:0060170">
    <property type="term" value="C:ciliary membrane"/>
    <property type="evidence" value="ECO:0007669"/>
    <property type="project" value="UniProtKB-SubCell"/>
</dbReference>
<dbReference type="GO" id="GO:0005886">
    <property type="term" value="C:plasma membrane"/>
    <property type="evidence" value="ECO:0000266"/>
    <property type="project" value="RGD"/>
</dbReference>
<dbReference type="GO" id="GO:0043235">
    <property type="term" value="C:receptor complex"/>
    <property type="evidence" value="ECO:0000266"/>
    <property type="project" value="RGD"/>
</dbReference>
<dbReference type="GO" id="GO:0008528">
    <property type="term" value="F:G protein-coupled peptide receptor activity"/>
    <property type="evidence" value="ECO:0000266"/>
    <property type="project" value="RGD"/>
</dbReference>
<dbReference type="GO" id="GO:0004930">
    <property type="term" value="F:G protein-coupled receptor activity"/>
    <property type="evidence" value="ECO:0000250"/>
    <property type="project" value="UniProtKB"/>
</dbReference>
<dbReference type="GO" id="GO:0042277">
    <property type="term" value="F:peptide binding"/>
    <property type="evidence" value="ECO:0000266"/>
    <property type="project" value="RGD"/>
</dbReference>
<dbReference type="GO" id="GO:0036505">
    <property type="term" value="F:prosaposin receptor activity"/>
    <property type="evidence" value="ECO:0000266"/>
    <property type="project" value="RGD"/>
</dbReference>
<dbReference type="GO" id="GO:0007193">
    <property type="term" value="P:adenylate cyclase-inhibiting G protein-coupled receptor signaling pathway"/>
    <property type="evidence" value="ECO:0000266"/>
    <property type="project" value="RGD"/>
</dbReference>
<dbReference type="GO" id="GO:0060020">
    <property type="term" value="P:Bergmann glial cell differentiation"/>
    <property type="evidence" value="ECO:0000266"/>
    <property type="project" value="RGD"/>
</dbReference>
<dbReference type="GO" id="GO:0034614">
    <property type="term" value="P:cellular response to reactive oxygen species"/>
    <property type="evidence" value="ECO:0000266"/>
    <property type="project" value="RGD"/>
</dbReference>
<dbReference type="GO" id="GO:0048712">
    <property type="term" value="P:negative regulation of astrocyte differentiation"/>
    <property type="evidence" value="ECO:0000266"/>
    <property type="project" value="RGD"/>
</dbReference>
<dbReference type="GO" id="GO:0045665">
    <property type="term" value="P:negative regulation of neuron differentiation"/>
    <property type="evidence" value="ECO:0000266"/>
    <property type="project" value="RGD"/>
</dbReference>
<dbReference type="GO" id="GO:0045879">
    <property type="term" value="P:negative regulation of smoothened signaling pathway"/>
    <property type="evidence" value="ECO:0000266"/>
    <property type="project" value="RGD"/>
</dbReference>
<dbReference type="GO" id="GO:0003085">
    <property type="term" value="P:negative regulation of systemic arterial blood pressure"/>
    <property type="evidence" value="ECO:0000250"/>
    <property type="project" value="UniProtKB"/>
</dbReference>
<dbReference type="GO" id="GO:0021940">
    <property type="term" value="P:positive regulation of cerebellar granule cell precursor proliferation"/>
    <property type="evidence" value="ECO:0000266"/>
    <property type="project" value="RGD"/>
</dbReference>
<dbReference type="GO" id="GO:0043410">
    <property type="term" value="P:positive regulation of MAPK cascade"/>
    <property type="evidence" value="ECO:0000266"/>
    <property type="project" value="RGD"/>
</dbReference>
<dbReference type="GO" id="GO:0007224">
    <property type="term" value="P:smoothened signaling pathway"/>
    <property type="evidence" value="ECO:0000266"/>
    <property type="project" value="RGD"/>
</dbReference>
<dbReference type="CDD" id="cd15126">
    <property type="entry name" value="7tmA_ETBR-LP2"/>
    <property type="match status" value="1"/>
</dbReference>
<dbReference type="FunFam" id="1.20.1070.10:FF:000059">
    <property type="entry name" value="G protein-coupled receptor 37"/>
    <property type="match status" value="1"/>
</dbReference>
<dbReference type="Gene3D" id="1.20.1070.10">
    <property type="entry name" value="Rhodopsin 7-helix transmembrane proteins"/>
    <property type="match status" value="1"/>
</dbReference>
<dbReference type="InterPro" id="IPR000276">
    <property type="entry name" value="GPCR_Rhodpsn"/>
</dbReference>
<dbReference type="InterPro" id="IPR017452">
    <property type="entry name" value="GPCR_Rhodpsn_7TM"/>
</dbReference>
<dbReference type="InterPro" id="IPR003909">
    <property type="entry name" value="GPR37_orph"/>
</dbReference>
<dbReference type="PANTHER" id="PTHR46216:SF4">
    <property type="entry name" value="G-PROTEIN COUPLED RECEPTOR 37-LIKE 1"/>
    <property type="match status" value="1"/>
</dbReference>
<dbReference type="PANTHER" id="PTHR46216">
    <property type="entry name" value="PROSAPOSIN RECEPTOR GPR37 FAMILY MEMBER"/>
    <property type="match status" value="1"/>
</dbReference>
<dbReference type="Pfam" id="PF00001">
    <property type="entry name" value="7tm_1"/>
    <property type="match status" value="1"/>
</dbReference>
<dbReference type="PRINTS" id="PR00237">
    <property type="entry name" value="GPCRRHODOPSN"/>
</dbReference>
<dbReference type="PRINTS" id="PR01421">
    <property type="entry name" value="GPR37ORPHANR"/>
</dbReference>
<dbReference type="SUPFAM" id="SSF81321">
    <property type="entry name" value="Family A G protein-coupled receptor-like"/>
    <property type="match status" value="1"/>
</dbReference>
<dbReference type="PROSITE" id="PS50262">
    <property type="entry name" value="G_PROTEIN_RECEP_F1_2"/>
    <property type="match status" value="1"/>
</dbReference>
<reference key="1">
    <citation type="journal article" date="1999" name="Brain Res. Mol. Brain Res.">
        <title>Molecular cloning and characterization of two putative G protein-coupled receptors which are highly expressed in the central nervous system.</title>
        <authorList>
            <person name="Leng N."/>
            <person name="Gu G."/>
            <person name="Simerly R.B."/>
            <person name="Spindel E.R."/>
        </authorList>
    </citation>
    <scope>NUCLEOTIDE SEQUENCE [MRNA]</scope>
    <scope>TISSUE SPECIFICITY</scope>
    <source>
        <tissue>Hypothalamus</tissue>
    </source>
</reference>
<reference key="2">
    <citation type="journal article" date="2012" name="Nat. Commun.">
        <title>Quantitative maps of protein phosphorylation sites across 14 different rat organs and tissues.</title>
        <authorList>
            <person name="Lundby A."/>
            <person name="Secher A."/>
            <person name="Lage K."/>
            <person name="Nordsborg N.B."/>
            <person name="Dmytriyev A."/>
            <person name="Lundby C."/>
            <person name="Olsen J.V."/>
        </authorList>
    </citation>
    <scope>PHOSPHORYLATION [LARGE SCALE ANALYSIS] AT SER-471</scope>
    <scope>IDENTIFICATION BY MASS SPECTROMETRY [LARGE SCALE ANALYSIS]</scope>
</reference>
<reference key="3">
    <citation type="journal article" date="2016" name="Sci. Signal.">
        <title>Metalloprotease cleavage of the N terminus of the orphan G protein-coupled receptor GPR37L1 reduces its constitutive activity.</title>
        <authorList>
            <person name="Coleman J.L."/>
            <person name="Ngo T."/>
            <person name="Schmidt J."/>
            <person name="Mrad N."/>
            <person name="Liew C.K."/>
            <person name="Jones N.M."/>
            <person name="Graham R.M."/>
            <person name="Smith N.J."/>
        </authorList>
    </citation>
    <scope>CLEAVAGE</scope>
</reference>
<comment type="function">
    <text evidence="1 2">G-protein coupled receptor (By similarity). Has been shown to bind the neuroprotective and glioprotective factor prosaposin (PSAP), leading to endocytosis followed by an ERK phosphorylation cascade (By similarity). However, other studies have shown that prosaposin does not increase activity (By similarity). It has been suggested that GPR37L1 is a constitutively active receptor which signals through the guanine nucleotide-binding protein G(s) subunit alpha (By similarity). Participates in the regulation of postnatal cerebellar development by modulating the Shh pathway (By similarity). Regulates baseline blood pressure in females and protects against cardiovascular stress in males (By similarity). Mediates inhibition of astrocyte glutamate transporters and reduction in neuronal N-methyl-D-aspartate receptor activity (By similarity).</text>
</comment>
<comment type="subunit">
    <text evidence="2">Interacts with the PTCH1 receptor.</text>
</comment>
<comment type="subcellular location">
    <subcellularLocation>
        <location evidence="1">Cell membrane</location>
        <topology evidence="3">Multi-pass membrane protein</topology>
    </subcellularLocation>
    <subcellularLocation>
        <location evidence="2">Cell projection</location>
        <location evidence="2">Cilium membrane</location>
        <topology evidence="3">Multi-pass membrane protein</topology>
    </subcellularLocation>
    <text evidence="2">Associates with the basal membrane of Bergmann glia cell primary cilia.</text>
</comment>
<comment type="tissue specificity">
    <text evidence="6">Highly expressed in brain.</text>
</comment>
<comment type="domain">
    <text evidence="1">The N-terminal region is required for constitutive signal transduction.</text>
</comment>
<comment type="PTM">
    <text evidence="7">Undergoes metalloprotease-mediated cleavage which reduces its constitutive activity.</text>
</comment>
<comment type="PTM">
    <text evidence="1">Ubiquitinated.</text>
</comment>
<comment type="similarity">
    <text evidence="4">Belongs to the G-protein coupled receptor 1 family.</text>
</comment>
<comment type="caution">
    <text evidence="1">Has been reported to act as a receptor for prosaposin (PSAP). However, it has also been shown that prosaposin does not increase activity. It has been suggested that GPR37L1 is a constitutively active receptor.</text>
</comment>
<protein>
    <recommendedName>
        <fullName>G-protein coupled receptor 37-like 1</fullName>
    </recommendedName>
    <alternativeName>
        <fullName>Endothelin B receptor-like protein 2</fullName>
        <shortName>ETBR-LP-2</shortName>
    </alternativeName>
    <alternativeName>
        <fullName>G-protein coupled receptor CNS2</fullName>
    </alternativeName>
</protein>
<feature type="signal peptide" evidence="3">
    <location>
        <begin position="1"/>
        <end position="24"/>
    </location>
</feature>
<feature type="chain" id="PRO_0000012798" description="G-protein coupled receptor 37-like 1">
    <location>
        <begin position="25"/>
        <end position="481"/>
    </location>
</feature>
<feature type="topological domain" description="Extracellular" evidence="3">
    <location>
        <begin position="25"/>
        <end position="134"/>
    </location>
</feature>
<feature type="transmembrane region" description="Helical; Name=1" evidence="3">
    <location>
        <begin position="135"/>
        <end position="155"/>
    </location>
</feature>
<feature type="topological domain" description="Cytoplasmic" evidence="3">
    <location>
        <begin position="156"/>
        <end position="167"/>
    </location>
</feature>
<feature type="transmembrane region" description="Helical; Name=2" evidence="3">
    <location>
        <begin position="168"/>
        <end position="188"/>
    </location>
</feature>
<feature type="topological domain" description="Extracellular" evidence="3">
    <location>
        <begin position="189"/>
        <end position="205"/>
    </location>
</feature>
<feature type="transmembrane region" description="Helical; Name=3" evidence="3">
    <location>
        <begin position="206"/>
        <end position="226"/>
    </location>
</feature>
<feature type="topological domain" description="Cytoplasmic" evidence="3">
    <location>
        <begin position="227"/>
        <end position="251"/>
    </location>
</feature>
<feature type="transmembrane region" description="Helical; Name=4" evidence="3">
    <location>
        <begin position="252"/>
        <end position="272"/>
    </location>
</feature>
<feature type="topological domain" description="Extracellular" evidence="3">
    <location>
        <begin position="273"/>
        <end position="310"/>
    </location>
</feature>
<feature type="transmembrane region" description="Helical; Name=5" evidence="3">
    <location>
        <begin position="311"/>
        <end position="331"/>
    </location>
</feature>
<feature type="topological domain" description="Cytoplasmic" evidence="3">
    <location>
        <begin position="332"/>
        <end position="360"/>
    </location>
</feature>
<feature type="transmembrane region" description="Helical; Name=6" evidence="3">
    <location>
        <begin position="361"/>
        <end position="381"/>
    </location>
</feature>
<feature type="topological domain" description="Extracellular" evidence="3">
    <location>
        <begin position="382"/>
        <end position="398"/>
    </location>
</feature>
<feature type="transmembrane region" description="Helical; Name=7" evidence="3">
    <location>
        <begin position="399"/>
        <end position="419"/>
    </location>
</feature>
<feature type="topological domain" description="Cytoplasmic" evidence="3">
    <location>
        <begin position="420"/>
        <end position="481"/>
    </location>
</feature>
<feature type="region of interest" description="Disordered" evidence="5">
    <location>
        <begin position="30"/>
        <end position="55"/>
    </location>
</feature>
<feature type="region of interest" description="Disordered" evidence="5">
    <location>
        <begin position="76"/>
        <end position="107"/>
    </location>
</feature>
<feature type="compositionally biased region" description="Polar residues" evidence="5">
    <location>
        <begin position="95"/>
        <end position="107"/>
    </location>
</feature>
<feature type="modified residue" description="Phosphoserine" evidence="8">
    <location>
        <position position="471"/>
    </location>
</feature>
<feature type="modified residue" description="Phosphothreonine" evidence="2">
    <location>
        <position position="479"/>
    </location>
</feature>
<feature type="glycosylation site" description="N-linked (GlcNAc...) asparagine" evidence="3">
    <location>
        <position position="105"/>
    </location>
</feature>
<feature type="disulfide bond" evidence="4">
    <location>
        <begin position="203"/>
        <end position="286"/>
    </location>
</feature>
<organism>
    <name type="scientific">Rattus norvegicus</name>
    <name type="common">Rat</name>
    <dbReference type="NCBI Taxonomy" id="10116"/>
    <lineage>
        <taxon>Eukaryota</taxon>
        <taxon>Metazoa</taxon>
        <taxon>Chordata</taxon>
        <taxon>Craniata</taxon>
        <taxon>Vertebrata</taxon>
        <taxon>Euteleostomi</taxon>
        <taxon>Mammalia</taxon>
        <taxon>Eutheria</taxon>
        <taxon>Euarchontoglires</taxon>
        <taxon>Glires</taxon>
        <taxon>Rodentia</taxon>
        <taxon>Myomorpha</taxon>
        <taxon>Muroidea</taxon>
        <taxon>Muridae</taxon>
        <taxon>Murinae</taxon>
        <taxon>Rattus</taxon>
    </lineage>
</organism>
<gene>
    <name type="primary">Gpr37l1</name>
    <name type="synonym">Etbrlp2</name>
</gene>
<accession>Q9QYC5</accession>
<proteinExistence type="evidence at protein level"/>
<evidence type="ECO:0000250" key="1">
    <source>
        <dbReference type="UniProtKB" id="O60883"/>
    </source>
</evidence>
<evidence type="ECO:0000250" key="2">
    <source>
        <dbReference type="UniProtKB" id="Q99JG2"/>
    </source>
</evidence>
<evidence type="ECO:0000255" key="3"/>
<evidence type="ECO:0000255" key="4">
    <source>
        <dbReference type="PROSITE-ProRule" id="PRU00521"/>
    </source>
</evidence>
<evidence type="ECO:0000256" key="5">
    <source>
        <dbReference type="SAM" id="MobiDB-lite"/>
    </source>
</evidence>
<evidence type="ECO:0000269" key="6">
    <source>
    </source>
</evidence>
<evidence type="ECO:0000269" key="7">
    <source>
    </source>
</evidence>
<evidence type="ECO:0007744" key="8">
    <source>
    </source>
</evidence>